<comment type="function">
    <text>Inhibits integrins alpha-IIb/beta-3 (ITGA2B/ITGB3), alpha-V/beta-3 (ITGAV/ITGB3), and alpha-5/beta-1 (ITGA5/ITGB1).</text>
</comment>
<comment type="subunit">
    <text>Heterodimer with CC8B; disulfide-linked.</text>
</comment>
<comment type="subcellular location">
    <subcellularLocation>
        <location>Secreted</location>
    </subcellularLocation>
</comment>
<comment type="tissue specificity">
    <text>Expressed by the venom gland.</text>
</comment>
<comment type="similarity">
    <text evidence="2">Belongs to the disintegrin family. Dimeric disintegrin subfamily.</text>
</comment>
<protein>
    <recommendedName>
        <fullName>Disintegrin CC8A</fullName>
    </recommendedName>
</protein>
<feature type="chain" id="PRO_0000101788" description="Disintegrin CC8A">
    <location>
        <begin position="1"/>
        <end position="65"/>
    </location>
</feature>
<feature type="domain" description="Disintegrin" evidence="1">
    <location>
        <begin position="1"/>
        <end position="65"/>
    </location>
</feature>
<feature type="short sequence motif" description="Cell attachment site">
    <location>
        <begin position="43"/>
        <end position="45"/>
    </location>
</feature>
<feature type="disulfide bond" evidence="1">
    <location>
        <begin position="7"/>
        <end position="30"/>
    </location>
</feature>
<feature type="disulfide bond" description="Interchain (with CC8B)" evidence="1">
    <location>
        <position position="8"/>
    </location>
</feature>
<feature type="disulfide bond" description="Interchain (with CC8B)" evidence="1">
    <location>
        <position position="13"/>
    </location>
</feature>
<feature type="disulfide bond" evidence="1">
    <location>
        <begin position="21"/>
        <end position="27"/>
    </location>
</feature>
<feature type="disulfide bond" evidence="1">
    <location>
        <begin position="26"/>
        <end position="51"/>
    </location>
</feature>
<feature type="disulfide bond" evidence="1">
    <location>
        <begin position="39"/>
        <end position="58"/>
    </location>
</feature>
<sequence length="65" mass="7149">MNSAHPCCDPVTCKPKRGEHCISGPCCRNCKFLSPGTICKKARGDDMNDYCTGISSDCPRNRIKK</sequence>
<organism>
    <name type="scientific">Cerastes cerastes</name>
    <name type="common">Horned desert viper</name>
    <dbReference type="NCBI Taxonomy" id="8697"/>
    <lineage>
        <taxon>Eukaryota</taxon>
        <taxon>Metazoa</taxon>
        <taxon>Chordata</taxon>
        <taxon>Craniata</taxon>
        <taxon>Vertebrata</taxon>
        <taxon>Euteleostomi</taxon>
        <taxon>Lepidosauria</taxon>
        <taxon>Squamata</taxon>
        <taxon>Bifurcata</taxon>
        <taxon>Unidentata</taxon>
        <taxon>Episquamata</taxon>
        <taxon>Toxicofera</taxon>
        <taxon>Serpentes</taxon>
        <taxon>Colubroidea</taxon>
        <taxon>Viperidae</taxon>
        <taxon>Viperinae</taxon>
        <taxon>Cerastes</taxon>
    </lineage>
</organism>
<evidence type="ECO:0000255" key="1">
    <source>
        <dbReference type="PROSITE-ProRule" id="PRU00068"/>
    </source>
</evidence>
<evidence type="ECO:0000305" key="2"/>
<reference key="1">
    <citation type="journal article" date="2002" name="Biochemistry">
        <title>The presence of the WGD motif in CC8 heterodimeric disintegrin increases its inhibitory effect on alphaII(b)beta3, alpha(v)beta3, and alpha5beta1 integrins.</title>
        <authorList>
            <person name="Calvete J.J."/>
            <person name="Fox J.W."/>
            <person name="Agelan A."/>
            <person name="Niewiarowski S."/>
            <person name="Marcinkiewicz C."/>
        </authorList>
    </citation>
    <scope>PROTEIN SEQUENCE</scope>
    <source>
        <tissue>Venom</tissue>
    </source>
</reference>
<accession>P83043</accession>
<dbReference type="SMR" id="P83043"/>
<dbReference type="GO" id="GO:0005576">
    <property type="term" value="C:extracellular region"/>
    <property type="evidence" value="ECO:0007669"/>
    <property type="project" value="UniProtKB-SubCell"/>
</dbReference>
<dbReference type="GO" id="GO:0090729">
    <property type="term" value="F:toxin activity"/>
    <property type="evidence" value="ECO:0007669"/>
    <property type="project" value="UniProtKB-KW"/>
</dbReference>
<dbReference type="GO" id="GO:0007155">
    <property type="term" value="P:cell adhesion"/>
    <property type="evidence" value="ECO:0007669"/>
    <property type="project" value="UniProtKB-KW"/>
</dbReference>
<dbReference type="Gene3D" id="4.10.70.10">
    <property type="entry name" value="Disintegrin domain"/>
    <property type="match status" value="1"/>
</dbReference>
<dbReference type="InterPro" id="IPR018358">
    <property type="entry name" value="Disintegrin_CS"/>
</dbReference>
<dbReference type="InterPro" id="IPR001762">
    <property type="entry name" value="Disintegrin_dom"/>
</dbReference>
<dbReference type="InterPro" id="IPR036436">
    <property type="entry name" value="Disintegrin_dom_sf"/>
</dbReference>
<dbReference type="PANTHER" id="PTHR11905">
    <property type="entry name" value="ADAM A DISINTEGRIN AND METALLOPROTEASE DOMAIN"/>
    <property type="match status" value="1"/>
</dbReference>
<dbReference type="PANTHER" id="PTHR11905:SF159">
    <property type="entry name" value="ADAM METALLOPROTEASE"/>
    <property type="match status" value="1"/>
</dbReference>
<dbReference type="Pfam" id="PF00200">
    <property type="entry name" value="Disintegrin"/>
    <property type="match status" value="1"/>
</dbReference>
<dbReference type="PRINTS" id="PR00289">
    <property type="entry name" value="DISINTEGRIN"/>
</dbReference>
<dbReference type="SMART" id="SM00050">
    <property type="entry name" value="DISIN"/>
    <property type="match status" value="1"/>
</dbReference>
<dbReference type="SUPFAM" id="SSF57552">
    <property type="entry name" value="Blood coagulation inhibitor (disintegrin)"/>
    <property type="match status" value="1"/>
</dbReference>
<dbReference type="PROSITE" id="PS00427">
    <property type="entry name" value="DISINTEGRIN_1"/>
    <property type="match status" value="1"/>
</dbReference>
<dbReference type="PROSITE" id="PS50214">
    <property type="entry name" value="DISINTEGRIN_2"/>
    <property type="match status" value="1"/>
</dbReference>
<proteinExistence type="evidence at protein level"/>
<name>DID8A_CERCE</name>
<keyword id="KW-0130">Cell adhesion</keyword>
<keyword id="KW-1217">Cell adhesion impairing toxin</keyword>
<keyword id="KW-0903">Direct protein sequencing</keyword>
<keyword id="KW-1015">Disulfide bond</keyword>
<keyword id="KW-0964">Secreted</keyword>
<keyword id="KW-0800">Toxin</keyword>